<dbReference type="EC" id="2.8.4.3" evidence="1"/>
<dbReference type="EMBL" id="CP000087">
    <property type="protein sequence ID" value="ABE04192.1"/>
    <property type="molecule type" value="Genomic_DNA"/>
</dbReference>
<dbReference type="RefSeq" id="WP_011476807.1">
    <property type="nucleotide sequence ID" value="NC_007940.1"/>
</dbReference>
<dbReference type="SMR" id="Q1RKC2"/>
<dbReference type="KEGG" id="rbe:RBE_0111"/>
<dbReference type="eggNOG" id="COG0621">
    <property type="taxonomic scope" value="Bacteria"/>
</dbReference>
<dbReference type="HOGENOM" id="CLU_018697_2_0_5"/>
<dbReference type="OrthoDB" id="9805215at2"/>
<dbReference type="Proteomes" id="UP000001951">
    <property type="component" value="Chromosome"/>
</dbReference>
<dbReference type="GO" id="GO:0005829">
    <property type="term" value="C:cytosol"/>
    <property type="evidence" value="ECO:0007669"/>
    <property type="project" value="TreeGrafter"/>
</dbReference>
<dbReference type="GO" id="GO:0051539">
    <property type="term" value="F:4 iron, 4 sulfur cluster binding"/>
    <property type="evidence" value="ECO:0007669"/>
    <property type="project" value="UniProtKB-UniRule"/>
</dbReference>
<dbReference type="GO" id="GO:0046872">
    <property type="term" value="F:metal ion binding"/>
    <property type="evidence" value="ECO:0007669"/>
    <property type="project" value="UniProtKB-KW"/>
</dbReference>
<dbReference type="GO" id="GO:0035597">
    <property type="term" value="F:N6-isopentenyladenosine methylthiotransferase activity"/>
    <property type="evidence" value="ECO:0007669"/>
    <property type="project" value="TreeGrafter"/>
</dbReference>
<dbReference type="CDD" id="cd01335">
    <property type="entry name" value="Radical_SAM"/>
    <property type="match status" value="1"/>
</dbReference>
<dbReference type="FunFam" id="3.40.50.12160:FF:000001">
    <property type="entry name" value="tRNA-2-methylthio-N(6)-dimethylallyladenosine synthase"/>
    <property type="match status" value="1"/>
</dbReference>
<dbReference type="FunFam" id="3.80.30.20:FF:000001">
    <property type="entry name" value="tRNA-2-methylthio-N(6)-dimethylallyladenosine synthase 2"/>
    <property type="match status" value="1"/>
</dbReference>
<dbReference type="Gene3D" id="3.40.50.12160">
    <property type="entry name" value="Methylthiotransferase, N-terminal domain"/>
    <property type="match status" value="1"/>
</dbReference>
<dbReference type="Gene3D" id="3.80.30.20">
    <property type="entry name" value="tm_1862 like domain"/>
    <property type="match status" value="1"/>
</dbReference>
<dbReference type="HAMAP" id="MF_01864">
    <property type="entry name" value="tRNA_metthiotr_MiaB"/>
    <property type="match status" value="1"/>
</dbReference>
<dbReference type="InterPro" id="IPR006638">
    <property type="entry name" value="Elp3/MiaA/NifB-like_rSAM"/>
</dbReference>
<dbReference type="InterPro" id="IPR005839">
    <property type="entry name" value="Methylthiotransferase"/>
</dbReference>
<dbReference type="InterPro" id="IPR020612">
    <property type="entry name" value="Methylthiotransferase_CS"/>
</dbReference>
<dbReference type="InterPro" id="IPR013848">
    <property type="entry name" value="Methylthiotransferase_N"/>
</dbReference>
<dbReference type="InterPro" id="IPR038135">
    <property type="entry name" value="Methylthiotransferase_N_sf"/>
</dbReference>
<dbReference type="InterPro" id="IPR006463">
    <property type="entry name" value="MiaB_methiolase"/>
</dbReference>
<dbReference type="InterPro" id="IPR007197">
    <property type="entry name" value="rSAM"/>
</dbReference>
<dbReference type="InterPro" id="IPR023404">
    <property type="entry name" value="rSAM_horseshoe"/>
</dbReference>
<dbReference type="InterPro" id="IPR002792">
    <property type="entry name" value="TRAM_dom"/>
</dbReference>
<dbReference type="NCBIfam" id="TIGR01574">
    <property type="entry name" value="miaB-methiolase"/>
    <property type="match status" value="1"/>
</dbReference>
<dbReference type="NCBIfam" id="TIGR00089">
    <property type="entry name" value="MiaB/RimO family radical SAM methylthiotransferase"/>
    <property type="match status" value="1"/>
</dbReference>
<dbReference type="PANTHER" id="PTHR43020">
    <property type="entry name" value="CDK5 REGULATORY SUBUNIT-ASSOCIATED PROTEIN 1"/>
    <property type="match status" value="1"/>
</dbReference>
<dbReference type="PANTHER" id="PTHR43020:SF2">
    <property type="entry name" value="MITOCHONDRIAL TRNA METHYLTHIOTRANSFERASE CDK5RAP1"/>
    <property type="match status" value="1"/>
</dbReference>
<dbReference type="Pfam" id="PF04055">
    <property type="entry name" value="Radical_SAM"/>
    <property type="match status" value="1"/>
</dbReference>
<dbReference type="Pfam" id="PF01938">
    <property type="entry name" value="TRAM"/>
    <property type="match status" value="1"/>
</dbReference>
<dbReference type="Pfam" id="PF00919">
    <property type="entry name" value="UPF0004"/>
    <property type="match status" value="1"/>
</dbReference>
<dbReference type="SFLD" id="SFLDF00273">
    <property type="entry name" value="(dimethylallyl)adenosine_tRNA"/>
    <property type="match status" value="1"/>
</dbReference>
<dbReference type="SFLD" id="SFLDG01082">
    <property type="entry name" value="B12-binding_domain_containing"/>
    <property type="match status" value="1"/>
</dbReference>
<dbReference type="SFLD" id="SFLDS00029">
    <property type="entry name" value="Radical_SAM"/>
    <property type="match status" value="1"/>
</dbReference>
<dbReference type="SMART" id="SM00729">
    <property type="entry name" value="Elp3"/>
    <property type="match status" value="1"/>
</dbReference>
<dbReference type="SUPFAM" id="SSF102114">
    <property type="entry name" value="Radical SAM enzymes"/>
    <property type="match status" value="1"/>
</dbReference>
<dbReference type="PROSITE" id="PS51449">
    <property type="entry name" value="MTTASE_N"/>
    <property type="match status" value="1"/>
</dbReference>
<dbReference type="PROSITE" id="PS01278">
    <property type="entry name" value="MTTASE_RADICAL"/>
    <property type="match status" value="1"/>
</dbReference>
<dbReference type="PROSITE" id="PS51918">
    <property type="entry name" value="RADICAL_SAM"/>
    <property type="match status" value="1"/>
</dbReference>
<dbReference type="PROSITE" id="PS50926">
    <property type="entry name" value="TRAM"/>
    <property type="match status" value="1"/>
</dbReference>
<reference key="1">
    <citation type="journal article" date="2006" name="PLoS Genet.">
        <title>Genome sequence of Rickettsia bellii illuminates the role of amoebae in gene exchanges between intracellular pathogens.</title>
        <authorList>
            <person name="Ogata H."/>
            <person name="La Scola B."/>
            <person name="Audic S."/>
            <person name="Renesto P."/>
            <person name="Blanc G."/>
            <person name="Robert C."/>
            <person name="Fournier P.-E."/>
            <person name="Claverie J.-M."/>
            <person name="Raoult D."/>
        </authorList>
    </citation>
    <scope>NUCLEOTIDE SEQUENCE [LARGE SCALE GENOMIC DNA]</scope>
    <source>
        <strain>RML369-C</strain>
    </source>
</reference>
<keyword id="KW-0004">4Fe-4S</keyword>
<keyword id="KW-0963">Cytoplasm</keyword>
<keyword id="KW-0408">Iron</keyword>
<keyword id="KW-0411">Iron-sulfur</keyword>
<keyword id="KW-0479">Metal-binding</keyword>
<keyword id="KW-0949">S-adenosyl-L-methionine</keyword>
<keyword id="KW-0808">Transferase</keyword>
<keyword id="KW-0819">tRNA processing</keyword>
<feature type="chain" id="PRO_0000374503" description="tRNA-2-methylthio-N(6)-dimethylallyladenosine synthase">
    <location>
        <begin position="1"/>
        <end position="446"/>
    </location>
</feature>
<feature type="domain" description="MTTase N-terminal" evidence="1">
    <location>
        <begin position="3"/>
        <end position="124"/>
    </location>
</feature>
<feature type="domain" description="Radical SAM core" evidence="2">
    <location>
        <begin position="148"/>
        <end position="380"/>
    </location>
</feature>
<feature type="domain" description="TRAM" evidence="1">
    <location>
        <begin position="383"/>
        <end position="446"/>
    </location>
</feature>
<feature type="binding site" evidence="1">
    <location>
        <position position="12"/>
    </location>
    <ligand>
        <name>[4Fe-4S] cluster</name>
        <dbReference type="ChEBI" id="CHEBI:49883"/>
        <label>1</label>
    </ligand>
</feature>
<feature type="binding site" evidence="1">
    <location>
        <position position="48"/>
    </location>
    <ligand>
        <name>[4Fe-4S] cluster</name>
        <dbReference type="ChEBI" id="CHEBI:49883"/>
        <label>1</label>
    </ligand>
</feature>
<feature type="binding site" evidence="1">
    <location>
        <position position="87"/>
    </location>
    <ligand>
        <name>[4Fe-4S] cluster</name>
        <dbReference type="ChEBI" id="CHEBI:49883"/>
        <label>1</label>
    </ligand>
</feature>
<feature type="binding site" evidence="1">
    <location>
        <position position="162"/>
    </location>
    <ligand>
        <name>[4Fe-4S] cluster</name>
        <dbReference type="ChEBI" id="CHEBI:49883"/>
        <label>2</label>
        <note>4Fe-4S-S-AdoMet</note>
    </ligand>
</feature>
<feature type="binding site" evidence="1">
    <location>
        <position position="166"/>
    </location>
    <ligand>
        <name>[4Fe-4S] cluster</name>
        <dbReference type="ChEBI" id="CHEBI:49883"/>
        <label>2</label>
        <note>4Fe-4S-S-AdoMet</note>
    </ligand>
</feature>
<feature type="binding site" evidence="1">
    <location>
        <position position="169"/>
    </location>
    <ligand>
        <name>[4Fe-4S] cluster</name>
        <dbReference type="ChEBI" id="CHEBI:49883"/>
        <label>2</label>
        <note>4Fe-4S-S-AdoMet</note>
    </ligand>
</feature>
<protein>
    <recommendedName>
        <fullName evidence="1">tRNA-2-methylthio-N(6)-dimethylallyladenosine synthase</fullName>
        <ecNumber evidence="1">2.8.4.3</ecNumber>
    </recommendedName>
    <alternativeName>
        <fullName evidence="1">(Dimethylallyl)adenosine tRNA methylthiotransferase MiaB</fullName>
    </alternativeName>
    <alternativeName>
        <fullName evidence="1">tRNA-i(6)A37 methylthiotransferase</fullName>
    </alternativeName>
</protein>
<gene>
    <name evidence="1" type="primary">miaB</name>
    <name type="ordered locus">RBE_0111</name>
</gene>
<organism>
    <name type="scientific">Rickettsia bellii (strain RML369-C)</name>
    <dbReference type="NCBI Taxonomy" id="336407"/>
    <lineage>
        <taxon>Bacteria</taxon>
        <taxon>Pseudomonadati</taxon>
        <taxon>Pseudomonadota</taxon>
        <taxon>Alphaproteobacteria</taxon>
        <taxon>Rickettsiales</taxon>
        <taxon>Rickettsiaceae</taxon>
        <taxon>Rickettsieae</taxon>
        <taxon>Rickettsia</taxon>
        <taxon>belli group</taxon>
    </lineage>
</organism>
<sequence length="446" mass="50714">MSKKLYIKTYGCQMNVYDSVKMQDLLYPYGYEPTENIEEADVIILNTCHIREKAAEKTYSELGRIKKLQDARKKQGLNSAIIVVAGCVAQAEGEEIFTRTPYVDIVVGPQSYYNLPELISKVVRHEKHLIDLDFVEEAKFDQLPEQLYPQGASSFISVQEGCDKFCTFCVVPYTRGAEFSRNVEQVYREALKIVSSGAKEIMLLGQNVNAYHGKTSDDKVFTLADLIRHLVKIPNLERLRYTTSHPIDMTDDLISLHGLEPKLMPFLHLPVQSGSNKTLKAMNRKHDRDYYFDIIDRLRKARADIVLSSDFIVGFPGETDEDFADTLDLVRKVKYGQCYSFKYSPRPGTPGATRTDQVPEHIKSERLTILQKELAAQQLAFNESCIGSTMKVLFDRDGKFDDQIIGKTPYMQSVYIKNPNKDLLGKIIEVKITKAALNSLSGEIYR</sequence>
<name>MIAB_RICBR</name>
<comment type="function">
    <text evidence="1">Catalyzes the methylthiolation of N6-(dimethylallyl)adenosine (i(6)A), leading to the formation of 2-methylthio-N6-(dimethylallyl)adenosine (ms(2)i(6)A) at position 37 in tRNAs that read codons beginning with uridine.</text>
</comment>
<comment type="catalytic activity">
    <reaction evidence="1">
        <text>N(6)-dimethylallyladenosine(37) in tRNA + (sulfur carrier)-SH + AH2 + 2 S-adenosyl-L-methionine = 2-methylsulfanyl-N(6)-dimethylallyladenosine(37) in tRNA + (sulfur carrier)-H + 5'-deoxyadenosine + L-methionine + A + S-adenosyl-L-homocysteine + 2 H(+)</text>
        <dbReference type="Rhea" id="RHEA:37067"/>
        <dbReference type="Rhea" id="RHEA-COMP:10375"/>
        <dbReference type="Rhea" id="RHEA-COMP:10376"/>
        <dbReference type="Rhea" id="RHEA-COMP:14737"/>
        <dbReference type="Rhea" id="RHEA-COMP:14739"/>
        <dbReference type="ChEBI" id="CHEBI:13193"/>
        <dbReference type="ChEBI" id="CHEBI:15378"/>
        <dbReference type="ChEBI" id="CHEBI:17319"/>
        <dbReference type="ChEBI" id="CHEBI:17499"/>
        <dbReference type="ChEBI" id="CHEBI:29917"/>
        <dbReference type="ChEBI" id="CHEBI:57844"/>
        <dbReference type="ChEBI" id="CHEBI:57856"/>
        <dbReference type="ChEBI" id="CHEBI:59789"/>
        <dbReference type="ChEBI" id="CHEBI:64428"/>
        <dbReference type="ChEBI" id="CHEBI:74415"/>
        <dbReference type="ChEBI" id="CHEBI:74417"/>
        <dbReference type="EC" id="2.8.4.3"/>
    </reaction>
</comment>
<comment type="cofactor">
    <cofactor evidence="1">
        <name>[4Fe-4S] cluster</name>
        <dbReference type="ChEBI" id="CHEBI:49883"/>
    </cofactor>
    <text evidence="1">Binds 2 [4Fe-4S] clusters. One cluster is coordinated with 3 cysteines and an exchangeable S-adenosyl-L-methionine.</text>
</comment>
<comment type="subunit">
    <text evidence="1">Monomer.</text>
</comment>
<comment type="subcellular location">
    <subcellularLocation>
        <location evidence="1">Cytoplasm</location>
    </subcellularLocation>
</comment>
<comment type="similarity">
    <text evidence="1">Belongs to the methylthiotransferase family. MiaB subfamily.</text>
</comment>
<accession>Q1RKC2</accession>
<evidence type="ECO:0000255" key="1">
    <source>
        <dbReference type="HAMAP-Rule" id="MF_01864"/>
    </source>
</evidence>
<evidence type="ECO:0000255" key="2">
    <source>
        <dbReference type="PROSITE-ProRule" id="PRU01266"/>
    </source>
</evidence>
<proteinExistence type="inferred from homology"/>